<feature type="chain" id="PRO_0000390422" description="Ubiquitin carboxyl-terminal hydrolase 20">
    <location>
        <begin position="1"/>
        <end position="884"/>
    </location>
</feature>
<feature type="domain" description="USP">
    <location>
        <begin position="145"/>
        <end position="655"/>
    </location>
</feature>
<feature type="domain" description="DUSP 1" evidence="3">
    <location>
        <begin position="657"/>
        <end position="750"/>
    </location>
</feature>
<feature type="domain" description="DUSP 2" evidence="3">
    <location>
        <begin position="759"/>
        <end position="862"/>
    </location>
</feature>
<feature type="zinc finger region" description="UBP-type" evidence="2">
    <location>
        <begin position="6"/>
        <end position="109"/>
    </location>
</feature>
<feature type="region of interest" description="Disordered" evidence="6">
    <location>
        <begin position="95"/>
        <end position="142"/>
    </location>
</feature>
<feature type="region of interest" description="Disordered" evidence="6">
    <location>
        <begin position="247"/>
        <end position="296"/>
    </location>
</feature>
<feature type="region of interest" description="Disordered" evidence="6">
    <location>
        <begin position="368"/>
        <end position="388"/>
    </location>
</feature>
<feature type="compositionally biased region" description="Acidic residues" evidence="6">
    <location>
        <begin position="128"/>
        <end position="138"/>
    </location>
</feature>
<feature type="compositionally biased region" description="Basic and acidic residues" evidence="6">
    <location>
        <begin position="264"/>
        <end position="274"/>
    </location>
</feature>
<feature type="compositionally biased region" description="Gly residues" evidence="6">
    <location>
        <begin position="286"/>
        <end position="296"/>
    </location>
</feature>
<feature type="compositionally biased region" description="Low complexity" evidence="6">
    <location>
        <begin position="376"/>
        <end position="388"/>
    </location>
</feature>
<feature type="active site" description="Nucleophile" evidence="4 5">
    <location>
        <position position="154"/>
    </location>
</feature>
<feature type="active site" description="Proton acceptor" evidence="4 5">
    <location>
        <position position="613"/>
    </location>
</feature>
<feature type="binding site" evidence="2">
    <location>
        <position position="8"/>
    </location>
    <ligand>
        <name>Zn(2+)</name>
        <dbReference type="ChEBI" id="CHEBI:29105"/>
        <label>1</label>
    </ligand>
</feature>
<feature type="binding site" evidence="2">
    <location>
        <position position="10"/>
    </location>
    <ligand>
        <name>Zn(2+)</name>
        <dbReference type="ChEBI" id="CHEBI:29105"/>
        <label>1</label>
    </ligand>
</feature>
<feature type="binding site" evidence="2">
    <location>
        <position position="30"/>
    </location>
    <ligand>
        <name>Zn(2+)</name>
        <dbReference type="ChEBI" id="CHEBI:29105"/>
        <label>2</label>
    </ligand>
</feature>
<feature type="binding site" evidence="2">
    <location>
        <position position="33"/>
    </location>
    <ligand>
        <name>Zn(2+)</name>
        <dbReference type="ChEBI" id="CHEBI:29105"/>
        <label>2</label>
    </ligand>
</feature>
<feature type="binding site" evidence="2">
    <location>
        <position position="43"/>
    </location>
    <ligand>
        <name>Zn(2+)</name>
        <dbReference type="ChEBI" id="CHEBI:29105"/>
        <label>3</label>
    </ligand>
</feature>
<feature type="binding site" evidence="2">
    <location>
        <position position="48"/>
    </location>
    <ligand>
        <name>Zn(2+)</name>
        <dbReference type="ChEBI" id="CHEBI:29105"/>
        <label>3</label>
    </ligand>
</feature>
<feature type="binding site" evidence="2">
    <location>
        <position position="53"/>
    </location>
    <ligand>
        <name>Zn(2+)</name>
        <dbReference type="ChEBI" id="CHEBI:29105"/>
        <label>2</label>
    </ligand>
</feature>
<feature type="binding site" evidence="2">
    <location>
        <position position="60"/>
    </location>
    <ligand>
        <name>Zn(2+)</name>
        <dbReference type="ChEBI" id="CHEBI:29105"/>
        <label>2</label>
    </ligand>
</feature>
<feature type="binding site" evidence="2">
    <location>
        <position position="64"/>
    </location>
    <ligand>
        <name>Zn(2+)</name>
        <dbReference type="ChEBI" id="CHEBI:29105"/>
        <label>3</label>
    </ligand>
</feature>
<feature type="binding site" evidence="2">
    <location>
        <position position="70"/>
    </location>
    <ligand>
        <name>Zn(2+)</name>
        <dbReference type="ChEBI" id="CHEBI:29105"/>
        <label>3</label>
    </ligand>
</feature>
<feature type="binding site" evidence="2">
    <location>
        <position position="83"/>
    </location>
    <ligand>
        <name>Zn(2+)</name>
        <dbReference type="ChEBI" id="CHEBI:29105"/>
        <label>1</label>
    </ligand>
</feature>
<feature type="binding site" evidence="2">
    <location>
        <position position="86"/>
    </location>
    <ligand>
        <name>Zn(2+)</name>
        <dbReference type="ChEBI" id="CHEBI:29105"/>
        <label>1</label>
    </ligand>
</feature>
<proteinExistence type="evidence at transcript level"/>
<name>UBP20_XENTR</name>
<comment type="function">
    <text evidence="1">Deubiquitinating enzyme involved in beta-2 adrenergic receptor (adrb2) recycling. Acts as a regulator of G-protein coupled receptor (GPCR) signaling by mediating the deubiquitination beta-2 adrenergic receptor (adrb2). Plays a central role in adrb2 recycling and resensitization after prolonged agonist stimulation by constitutively binding adrb2, mediating deubiquitination of adrb2 and inhibiting lysosomal trafficking of adrb2. Mediates deubiquitination of both 'Lys-48'- and 'Lys-63'-linked polyubiquitin chains (By similarity).</text>
</comment>
<comment type="catalytic activity">
    <reaction>
        <text>Thiol-dependent hydrolysis of ester, thioester, amide, peptide and isopeptide bonds formed by the C-terminal Gly of ubiquitin (a 76-residue protein attached to proteins as an intracellular targeting signal).</text>
        <dbReference type="EC" id="3.4.19.12"/>
    </reaction>
</comment>
<comment type="subcellular location">
    <subcellularLocation>
        <location evidence="1">Cytoplasm</location>
        <location evidence="1">Perinuclear region</location>
    </subcellularLocation>
    <subcellularLocation>
        <location evidence="1">Cytoplasm</location>
        <location evidence="1">Cytoskeleton</location>
        <location evidence="1">Microtubule organizing center</location>
        <location evidence="1">Centrosome</location>
    </subcellularLocation>
</comment>
<comment type="domain">
    <text evidence="1">The UBP-type zinc finger binds 3 zinc ions. However, it does not bind ubiquitin, probably because the conserved Arg in position 55 is replaced by a Glu residue (By similarity).</text>
</comment>
<comment type="similarity">
    <text evidence="7">Belongs to the peptidase C19 family. USP20/USP33 subfamily.</text>
</comment>
<accession>A0JM59</accession>
<reference key="1">
    <citation type="submission" date="2006-10" db="EMBL/GenBank/DDBJ databases">
        <authorList>
            <consortium name="NIH - Xenopus Gene Collection (XGC) project"/>
        </authorList>
    </citation>
    <scope>NUCLEOTIDE SEQUENCE [LARGE SCALE MRNA]</scope>
    <source>
        <tissue>Testis</tissue>
    </source>
</reference>
<keyword id="KW-0963">Cytoplasm</keyword>
<keyword id="KW-0206">Cytoskeleton</keyword>
<keyword id="KW-0254">Endocytosis</keyword>
<keyword id="KW-0378">Hydrolase</keyword>
<keyword id="KW-0479">Metal-binding</keyword>
<keyword id="KW-0645">Protease</keyword>
<keyword id="KW-1185">Reference proteome</keyword>
<keyword id="KW-0677">Repeat</keyword>
<keyword id="KW-0788">Thiol protease</keyword>
<keyword id="KW-0833">Ubl conjugation pathway</keyword>
<keyword id="KW-0862">Zinc</keyword>
<keyword id="KW-0863">Zinc-finger</keyword>
<evidence type="ECO:0000250" key="1"/>
<evidence type="ECO:0000255" key="2">
    <source>
        <dbReference type="PROSITE-ProRule" id="PRU00502"/>
    </source>
</evidence>
<evidence type="ECO:0000255" key="3">
    <source>
        <dbReference type="PROSITE-ProRule" id="PRU00613"/>
    </source>
</evidence>
<evidence type="ECO:0000255" key="4">
    <source>
        <dbReference type="PROSITE-ProRule" id="PRU10092"/>
    </source>
</evidence>
<evidence type="ECO:0000255" key="5">
    <source>
        <dbReference type="PROSITE-ProRule" id="PRU10093"/>
    </source>
</evidence>
<evidence type="ECO:0000256" key="6">
    <source>
        <dbReference type="SAM" id="MobiDB-lite"/>
    </source>
</evidence>
<evidence type="ECO:0000305" key="7"/>
<dbReference type="EC" id="3.4.19.12"/>
<dbReference type="EMBL" id="BC125749">
    <property type="protein sequence ID" value="AAI25750.1"/>
    <property type="molecule type" value="mRNA"/>
</dbReference>
<dbReference type="RefSeq" id="NP_001090641.1">
    <property type="nucleotide sequence ID" value="NM_001097172.1"/>
</dbReference>
<dbReference type="FunCoup" id="A0JM59">
    <property type="interactions" value="1263"/>
</dbReference>
<dbReference type="STRING" id="8364.ENSXETP00000049622"/>
<dbReference type="MEROPS" id="C19.025"/>
<dbReference type="PaxDb" id="8364-ENSXETP00000028068"/>
<dbReference type="DNASU" id="100036606"/>
<dbReference type="GeneID" id="100036606"/>
<dbReference type="KEGG" id="xtr:100036606"/>
<dbReference type="AGR" id="Xenbase:XB-GENE-966528"/>
<dbReference type="CTD" id="10868"/>
<dbReference type="Xenbase" id="XB-GENE-966528">
    <property type="gene designation" value="usp20"/>
</dbReference>
<dbReference type="eggNOG" id="KOG1870">
    <property type="taxonomic scope" value="Eukaryota"/>
</dbReference>
<dbReference type="InParanoid" id="A0JM59"/>
<dbReference type="OrthoDB" id="73004at2759"/>
<dbReference type="Reactome" id="R-XTR-5689880">
    <property type="pathway name" value="Ub-specific processing proteases"/>
</dbReference>
<dbReference type="Proteomes" id="UP000008143">
    <property type="component" value="Chromosome 8"/>
</dbReference>
<dbReference type="GO" id="GO:0005813">
    <property type="term" value="C:centrosome"/>
    <property type="evidence" value="ECO:0000250"/>
    <property type="project" value="UniProtKB"/>
</dbReference>
<dbReference type="GO" id="GO:0048471">
    <property type="term" value="C:perinuclear region of cytoplasm"/>
    <property type="evidence" value="ECO:0007669"/>
    <property type="project" value="UniProtKB-SubCell"/>
</dbReference>
<dbReference type="GO" id="GO:0004843">
    <property type="term" value="F:cysteine-type deubiquitinase activity"/>
    <property type="evidence" value="ECO:0000250"/>
    <property type="project" value="UniProtKB"/>
</dbReference>
<dbReference type="GO" id="GO:0004197">
    <property type="term" value="F:cysteine-type endopeptidase activity"/>
    <property type="evidence" value="ECO:0000250"/>
    <property type="project" value="UniProtKB"/>
</dbReference>
<dbReference type="GO" id="GO:0008270">
    <property type="term" value="F:zinc ion binding"/>
    <property type="evidence" value="ECO:0007669"/>
    <property type="project" value="UniProtKB-KW"/>
</dbReference>
<dbReference type="GO" id="GO:0006897">
    <property type="term" value="P:endocytosis"/>
    <property type="evidence" value="ECO:0007669"/>
    <property type="project" value="UniProtKB-KW"/>
</dbReference>
<dbReference type="GO" id="GO:0016579">
    <property type="term" value="P:protein deubiquitination"/>
    <property type="evidence" value="ECO:0000250"/>
    <property type="project" value="UniProtKB"/>
</dbReference>
<dbReference type="GO" id="GO:0071108">
    <property type="term" value="P:protein K48-linked deubiquitination"/>
    <property type="evidence" value="ECO:0000250"/>
    <property type="project" value="UniProtKB"/>
</dbReference>
<dbReference type="GO" id="GO:0070536">
    <property type="term" value="P:protein K63-linked deubiquitination"/>
    <property type="evidence" value="ECO:0000250"/>
    <property type="project" value="UniProtKB"/>
</dbReference>
<dbReference type="GO" id="GO:0006508">
    <property type="term" value="P:proteolysis"/>
    <property type="evidence" value="ECO:0007669"/>
    <property type="project" value="UniProtKB-KW"/>
</dbReference>
<dbReference type="GO" id="GO:0008277">
    <property type="term" value="P:regulation of G protein-coupled receptor signaling pathway"/>
    <property type="evidence" value="ECO:0000250"/>
    <property type="project" value="UniProtKB"/>
</dbReference>
<dbReference type="CDD" id="cd02674">
    <property type="entry name" value="Peptidase_C19R"/>
    <property type="match status" value="1"/>
</dbReference>
<dbReference type="FunFam" id="3.30.2230.10:FF:000001">
    <property type="entry name" value="Ubiquitinyl hydrolase 1"/>
    <property type="match status" value="1"/>
</dbReference>
<dbReference type="FunFam" id="3.30.2230.10:FF:000002">
    <property type="entry name" value="Ubiquitinyl hydrolase 1"/>
    <property type="match status" value="1"/>
</dbReference>
<dbReference type="FunFam" id="3.30.40.10:FF:000065">
    <property type="entry name" value="Ubiquitinyl hydrolase 1"/>
    <property type="match status" value="1"/>
</dbReference>
<dbReference type="Gene3D" id="3.90.70.10">
    <property type="entry name" value="Cysteine proteinases"/>
    <property type="match status" value="2"/>
</dbReference>
<dbReference type="Gene3D" id="3.30.2230.10">
    <property type="entry name" value="DUSP-like"/>
    <property type="match status" value="2"/>
</dbReference>
<dbReference type="Gene3D" id="3.30.40.10">
    <property type="entry name" value="Zinc/RING finger domain, C3HC4 (zinc finger)"/>
    <property type="match status" value="1"/>
</dbReference>
<dbReference type="InterPro" id="IPR035927">
    <property type="entry name" value="DUSP-like_sf"/>
</dbReference>
<dbReference type="InterPro" id="IPR038765">
    <property type="entry name" value="Papain-like_cys_pep_sf"/>
</dbReference>
<dbReference type="InterPro" id="IPR006615">
    <property type="entry name" value="Pept_C19_DUSP"/>
</dbReference>
<dbReference type="InterPro" id="IPR001394">
    <property type="entry name" value="Peptidase_C19_UCH"/>
</dbReference>
<dbReference type="InterPro" id="IPR050185">
    <property type="entry name" value="Ub_carboxyl-term_hydrolase"/>
</dbReference>
<dbReference type="InterPro" id="IPR018200">
    <property type="entry name" value="USP_CS"/>
</dbReference>
<dbReference type="InterPro" id="IPR028889">
    <property type="entry name" value="USP_dom"/>
</dbReference>
<dbReference type="InterPro" id="IPR013083">
    <property type="entry name" value="Znf_RING/FYVE/PHD"/>
</dbReference>
<dbReference type="InterPro" id="IPR001607">
    <property type="entry name" value="Znf_UBP"/>
</dbReference>
<dbReference type="PANTHER" id="PTHR21646">
    <property type="entry name" value="UBIQUITIN CARBOXYL-TERMINAL HYDROLASE"/>
    <property type="match status" value="1"/>
</dbReference>
<dbReference type="PANTHER" id="PTHR21646:SF13">
    <property type="entry name" value="UBIQUITIN CARBOXYL-TERMINAL HYDROLASE 20"/>
    <property type="match status" value="1"/>
</dbReference>
<dbReference type="Pfam" id="PF06337">
    <property type="entry name" value="DUSP"/>
    <property type="match status" value="2"/>
</dbReference>
<dbReference type="Pfam" id="PF00443">
    <property type="entry name" value="UCH"/>
    <property type="match status" value="1"/>
</dbReference>
<dbReference type="Pfam" id="PF02148">
    <property type="entry name" value="zf-UBP"/>
    <property type="match status" value="1"/>
</dbReference>
<dbReference type="SMART" id="SM00695">
    <property type="entry name" value="DUSP"/>
    <property type="match status" value="2"/>
</dbReference>
<dbReference type="SMART" id="SM00290">
    <property type="entry name" value="ZnF_UBP"/>
    <property type="match status" value="1"/>
</dbReference>
<dbReference type="SUPFAM" id="SSF54001">
    <property type="entry name" value="Cysteine proteinases"/>
    <property type="match status" value="1"/>
</dbReference>
<dbReference type="SUPFAM" id="SSF143791">
    <property type="entry name" value="DUSP-like"/>
    <property type="match status" value="2"/>
</dbReference>
<dbReference type="SUPFAM" id="SSF57850">
    <property type="entry name" value="RING/U-box"/>
    <property type="match status" value="1"/>
</dbReference>
<dbReference type="PROSITE" id="PS51283">
    <property type="entry name" value="DUSP"/>
    <property type="match status" value="2"/>
</dbReference>
<dbReference type="PROSITE" id="PS00972">
    <property type="entry name" value="USP_1"/>
    <property type="match status" value="1"/>
</dbReference>
<dbReference type="PROSITE" id="PS00973">
    <property type="entry name" value="USP_2"/>
    <property type="match status" value="1"/>
</dbReference>
<dbReference type="PROSITE" id="PS50235">
    <property type="entry name" value="USP_3"/>
    <property type="match status" value="1"/>
</dbReference>
<dbReference type="PROSITE" id="PS50271">
    <property type="entry name" value="ZF_UBP"/>
    <property type="match status" value="1"/>
</dbReference>
<organism>
    <name type="scientific">Xenopus tropicalis</name>
    <name type="common">Western clawed frog</name>
    <name type="synonym">Silurana tropicalis</name>
    <dbReference type="NCBI Taxonomy" id="8364"/>
    <lineage>
        <taxon>Eukaryota</taxon>
        <taxon>Metazoa</taxon>
        <taxon>Chordata</taxon>
        <taxon>Craniata</taxon>
        <taxon>Vertebrata</taxon>
        <taxon>Euteleostomi</taxon>
        <taxon>Amphibia</taxon>
        <taxon>Batrachia</taxon>
        <taxon>Anura</taxon>
        <taxon>Pipoidea</taxon>
        <taxon>Pipidae</taxon>
        <taxon>Xenopodinae</taxon>
        <taxon>Xenopus</taxon>
        <taxon>Silurana</taxon>
    </lineage>
</organism>
<protein>
    <recommendedName>
        <fullName>Ubiquitin carboxyl-terminal hydrolase 20</fullName>
        <ecNumber>3.4.19.12</ecNumber>
    </recommendedName>
    <alternativeName>
        <fullName>Deubiquitinating enzyme 20</fullName>
    </alternativeName>
    <alternativeName>
        <fullName>Ubiquitin thioesterase 20</fullName>
    </alternativeName>
    <alternativeName>
        <fullName>Ubiquitin-specific-processing protease 20</fullName>
    </alternativeName>
</protein>
<sequence>MGDAEDFCPHLDSIGEVTKEDLILKSKGTCESCGVGGPNLWACLQDGCQSVGCGESYVDHSTLHAQAKKHNLTVNLTTFRVWCYACEKEVFLDPRGPPASQTTSPRLSHRDFPTSAHPLKSVPIAVGDDGESESDEDDIKPRGLTGMKNIGNSCYMNAALQALSNCPPLTQFFLECGGLVRTDKKPALCKSYQKLISELWHKKRPSYVVPSSLYHGIKLINPLFRGYSQQDTQEFLRCLMDQLHEELKEPVPLETQEREEEDRDDQREGERGGTVEEDFLSCDSGGEMGDGEGGGGVGTLSEMELLIREEVGRGLSEKEKLKERKLSYCHRRTSSEQADEDADVDTAMIPEPDNDAYVHCSSRSCSPHPVESISKHSSTPPRSSPLRTSHSYVLKKAQVLSGGKKRSEVRYRSVISDIFDGSILSLVQCLTCDRVSTTIETFQDLSLPIPGKEDLAKLHSTIHQSAVSKAGTCGDSYAAQGWLSFFMDYIRRFVVSCIPSWFWGPMITLEDCLAAFFAADELKGDNMYSCERCKKLRNGVKYCKVLRLPEILCIHLKRFRHEVMYSFKIGSHVSFPLEGLNLRPFLAKECVSRITTYDLLAVICHHGSASSGHYISYCQNVINGQWYEFDDQYVTEVHETVVQNAEAYVLFYRKSSEEAERERQKVVSLAAMKESGLLQFYISREWLNKFNTFAEPGPISNQSFLCSHGGIPPNKYHYIDDLVVILPQSVWEYLYNRFGGGPAVNHLYVCSICQVEIEALAKRRKTEIDTFIKLNKAFQAEEAPSVIYCISMQWFREWEAFVKAKDSDPPGPIDNSKVALTKSSGQVQLKQGADYGQISEETWNYLLNVYGGGPEIAIRQTVAQYQEAEHLHGEQKIEAETRAG</sequence>
<gene>
    <name type="primary">usp20</name>
</gene>